<proteinExistence type="inferred from homology"/>
<evidence type="ECO:0000255" key="1">
    <source>
        <dbReference type="HAMAP-Rule" id="MF_00270"/>
    </source>
</evidence>
<evidence type="ECO:0000305" key="2"/>
<reference key="1">
    <citation type="journal article" date="2009" name="J. Bacteriol.">
        <title>Complete genome sequence of Haemophilus parasuis SH0165.</title>
        <authorList>
            <person name="Yue M."/>
            <person name="Yang F."/>
            <person name="Yang J."/>
            <person name="Bei W."/>
            <person name="Cai X."/>
            <person name="Chen L."/>
            <person name="Dong J."/>
            <person name="Zhou R."/>
            <person name="Jin M."/>
            <person name="Jin Q."/>
            <person name="Chen H."/>
        </authorList>
    </citation>
    <scope>NUCLEOTIDE SEQUENCE [LARGE SCALE GENOMIC DNA]</scope>
    <source>
        <strain>SH0165</strain>
    </source>
</reference>
<feature type="chain" id="PRO_1000125806" description="Small ribosomal subunit protein bS18">
    <location>
        <begin position="1"/>
        <end position="75"/>
    </location>
</feature>
<dbReference type="EMBL" id="CP001321">
    <property type="protein sequence ID" value="ACL32687.1"/>
    <property type="molecule type" value="Genomic_DNA"/>
</dbReference>
<dbReference type="RefSeq" id="WP_005598105.1">
    <property type="nucleotide sequence ID" value="NC_011852.1"/>
</dbReference>
<dbReference type="SMR" id="B8F5T5"/>
<dbReference type="STRING" id="557723.HAPS_1069"/>
<dbReference type="GeneID" id="93219554"/>
<dbReference type="KEGG" id="hap:HAPS_1069"/>
<dbReference type="HOGENOM" id="CLU_148710_2_2_6"/>
<dbReference type="Proteomes" id="UP000006743">
    <property type="component" value="Chromosome"/>
</dbReference>
<dbReference type="GO" id="GO:0022627">
    <property type="term" value="C:cytosolic small ribosomal subunit"/>
    <property type="evidence" value="ECO:0007669"/>
    <property type="project" value="TreeGrafter"/>
</dbReference>
<dbReference type="GO" id="GO:0070181">
    <property type="term" value="F:small ribosomal subunit rRNA binding"/>
    <property type="evidence" value="ECO:0007669"/>
    <property type="project" value="TreeGrafter"/>
</dbReference>
<dbReference type="GO" id="GO:0003735">
    <property type="term" value="F:structural constituent of ribosome"/>
    <property type="evidence" value="ECO:0007669"/>
    <property type="project" value="InterPro"/>
</dbReference>
<dbReference type="GO" id="GO:0006412">
    <property type="term" value="P:translation"/>
    <property type="evidence" value="ECO:0007669"/>
    <property type="project" value="UniProtKB-UniRule"/>
</dbReference>
<dbReference type="FunFam" id="4.10.640.10:FF:000001">
    <property type="entry name" value="30S ribosomal protein S18"/>
    <property type="match status" value="1"/>
</dbReference>
<dbReference type="Gene3D" id="4.10.640.10">
    <property type="entry name" value="Ribosomal protein S18"/>
    <property type="match status" value="1"/>
</dbReference>
<dbReference type="HAMAP" id="MF_00270">
    <property type="entry name" value="Ribosomal_bS18"/>
    <property type="match status" value="1"/>
</dbReference>
<dbReference type="InterPro" id="IPR001648">
    <property type="entry name" value="Ribosomal_bS18"/>
</dbReference>
<dbReference type="InterPro" id="IPR018275">
    <property type="entry name" value="Ribosomal_bS18_CS"/>
</dbReference>
<dbReference type="InterPro" id="IPR036870">
    <property type="entry name" value="Ribosomal_bS18_sf"/>
</dbReference>
<dbReference type="NCBIfam" id="TIGR00165">
    <property type="entry name" value="S18"/>
    <property type="match status" value="1"/>
</dbReference>
<dbReference type="PANTHER" id="PTHR13479">
    <property type="entry name" value="30S RIBOSOMAL PROTEIN S18"/>
    <property type="match status" value="1"/>
</dbReference>
<dbReference type="PANTHER" id="PTHR13479:SF40">
    <property type="entry name" value="SMALL RIBOSOMAL SUBUNIT PROTEIN BS18M"/>
    <property type="match status" value="1"/>
</dbReference>
<dbReference type="Pfam" id="PF01084">
    <property type="entry name" value="Ribosomal_S18"/>
    <property type="match status" value="1"/>
</dbReference>
<dbReference type="PRINTS" id="PR00974">
    <property type="entry name" value="RIBOSOMALS18"/>
</dbReference>
<dbReference type="SUPFAM" id="SSF46911">
    <property type="entry name" value="Ribosomal protein S18"/>
    <property type="match status" value="1"/>
</dbReference>
<dbReference type="PROSITE" id="PS00057">
    <property type="entry name" value="RIBOSOMAL_S18"/>
    <property type="match status" value="1"/>
</dbReference>
<protein>
    <recommendedName>
        <fullName evidence="1">Small ribosomal subunit protein bS18</fullName>
    </recommendedName>
    <alternativeName>
        <fullName evidence="2">30S ribosomal protein S18</fullName>
    </alternativeName>
</protein>
<organism>
    <name type="scientific">Glaesserella parasuis serovar 5 (strain SH0165)</name>
    <name type="common">Haemophilus parasuis</name>
    <dbReference type="NCBI Taxonomy" id="557723"/>
    <lineage>
        <taxon>Bacteria</taxon>
        <taxon>Pseudomonadati</taxon>
        <taxon>Pseudomonadota</taxon>
        <taxon>Gammaproteobacteria</taxon>
        <taxon>Pasteurellales</taxon>
        <taxon>Pasteurellaceae</taxon>
        <taxon>Glaesserella</taxon>
    </lineage>
</organism>
<comment type="function">
    <text evidence="1">Binds as a heterodimer with protein bS6 to the central domain of the 16S rRNA, where it helps stabilize the platform of the 30S subunit.</text>
</comment>
<comment type="subunit">
    <text evidence="1">Part of the 30S ribosomal subunit. Forms a tight heterodimer with protein bS6.</text>
</comment>
<comment type="similarity">
    <text evidence="1">Belongs to the bacterial ribosomal protein bS18 family.</text>
</comment>
<gene>
    <name evidence="1" type="primary">rpsR</name>
    <name type="ordered locus">HAPS_1069</name>
</gene>
<name>RS18_GLAP5</name>
<keyword id="KW-1185">Reference proteome</keyword>
<keyword id="KW-0687">Ribonucleoprotein</keyword>
<keyword id="KW-0689">Ribosomal protein</keyword>
<keyword id="KW-0694">RNA-binding</keyword>
<keyword id="KW-0699">rRNA-binding</keyword>
<sequence length="75" mass="8942">MARYFRRRKFCRFTAENVVEIDYKDIATLKNYISESGKIVPSRITGTRAKYQRQLARAIKRARYLALLPYTDNHQ</sequence>
<accession>B8F5T5</accession>